<comment type="function">
    <text evidence="5">Serine endopeptidase which hydrolyzes a range of fluorogenic peptide substrates containing the basic residues arginine or lysine at the P1 position and prefers paired basic resides. Also hydrolyzes clupeine and salmine, activates plasminogen and converts trypsinogen to trypsin.</text>
</comment>
<comment type="cofactor">
    <cofactor evidence="5">
        <name>Ca(2+)</name>
        <dbReference type="ChEBI" id="CHEBI:29108"/>
    </cofactor>
    <text evidence="5">Binds 1 Ca(2+) ion per subunit.</text>
</comment>
<comment type="activity regulation">
    <text evidence="5">Inhibited by antipain and leupeptin.</text>
</comment>
<comment type="biophysicochemical properties">
    <kinetics>
        <KM evidence="5">0.7 uM for Boc-Gln-Arg-Arg-MCA</KM>
        <KM evidence="5">3.9 uM for Boc-Leu-Arg-Arg-MCA</KM>
        <KM evidence="5">2.8 uM for Boc-Gly-Arg-Arg-MCA</KM>
        <KM evidence="5">10 uM for Boc-Leu-Lys-Arg-MCA</KM>
        <KM evidence="5">26.8 uM for Boc-Gly-Lys-Arg-MCA</KM>
        <KM evidence="5">58 uM for Boc-Leu-Thr-Arg-MCA</KM>
        <KM evidence="5">84.5 uM for Boc-Leu-Gly-Arg-MCA</KM>
        <KM evidence="5">88.3 uM for Boc-Gln-Gly-Arg-MCA</KM>
        <Vmax evidence="5">12.8 nmol/sec/mg enzyme with Z-Arg-Arg-MCA as substrate</Vmax>
        <text evidence="5">The highest catalytic efficiency is observed for Boc-Leu-Lys-Arg-MCA.</text>
    </kinetics>
    <phDependence>
        <text evidence="5">Optimum pH is 4.0. Inactive below pH 3.0 and above pH 6.5. The half-life (t1/2) values for activity loss at 30 degrees Celsius are 150 minutes at pH 6.6, 5.5 minutes at pH 6.8 and 14 minutes at pH 2.4.</text>
    </phDependence>
    <temperatureDependence>
        <text evidence="5">Remains fully active after heating at 50 degrees Celsius and pH 4.0 for 10 minutes. Retains 65% of its activity after heating at 55 degrees Celsius for 10 minutes. The half-life value for loss of activity at 60 degrees Celsius and pH 4.0 is 3.5 minutes.</text>
    </temperatureDependence>
</comment>
<comment type="subcellular location">
    <subcellularLocation>
        <location evidence="5">Secreted</location>
        <location evidence="5">Extracellular space</location>
    </subcellularLocation>
</comment>
<comment type="developmental stage">
    <text evidence="5">Activity found in solid culture only. Increases at the initial growth stage and decreases in the late growth stage.</text>
</comment>
<comment type="PTM">
    <text evidence="5">N-glycosylated.</text>
</comment>
<comment type="PTM">
    <text evidence="6 7">O-glycosylated.</text>
</comment>
<gene>
    <name evidence="8" type="primary">aorO</name>
    <name type="ORF">AO090026000083</name>
</gene>
<evidence type="ECO:0000250" key="1"/>
<evidence type="ECO:0000250" key="2">
    <source>
        <dbReference type="UniProtKB" id="P42790"/>
    </source>
</evidence>
<evidence type="ECO:0000255" key="3"/>
<evidence type="ECO:0000256" key="4">
    <source>
        <dbReference type="SAM" id="MobiDB-lite"/>
    </source>
</evidence>
<evidence type="ECO:0000269" key="5">
    <source>
    </source>
</evidence>
<evidence type="ECO:0000303" key="6">
    <source>
    </source>
</evidence>
<evidence type="ECO:0000305" key="7"/>
<evidence type="ECO:0000312" key="8">
    <source>
        <dbReference type="EMBL" id="BAB97387.1"/>
    </source>
</evidence>
<proteinExistence type="evidence at protein level"/>
<protein>
    <recommendedName>
        <fullName>Aorsin</fullName>
        <ecNumber>3.4.21.-</ecNumber>
    </recommendedName>
</protein>
<organism>
    <name type="scientific">Aspergillus oryzae (strain ATCC 42149 / RIB 40)</name>
    <name type="common">Yellow koji mold</name>
    <dbReference type="NCBI Taxonomy" id="510516"/>
    <lineage>
        <taxon>Eukaryota</taxon>
        <taxon>Fungi</taxon>
        <taxon>Dikarya</taxon>
        <taxon>Ascomycota</taxon>
        <taxon>Pezizomycotina</taxon>
        <taxon>Eurotiomycetes</taxon>
        <taxon>Eurotiomycetidae</taxon>
        <taxon>Eurotiales</taxon>
        <taxon>Aspergillaceae</taxon>
        <taxon>Aspergillus</taxon>
        <taxon>Aspergillus subgen. Circumdati</taxon>
    </lineage>
</organism>
<reference evidence="7 8" key="1">
    <citation type="journal article" date="2003" name="Biochem. J.">
        <title>Aorsin, a novel serine proteinase with trypsin-like specificity at acidic pH.</title>
        <authorList>
            <person name="Lee B.R."/>
            <person name="Furukawa M."/>
            <person name="Yamashita K."/>
            <person name="Kanasugi Y."/>
            <person name="Kawabata C."/>
            <person name="Hirano K."/>
            <person name="Ando K."/>
            <person name="Ichishima E."/>
        </authorList>
    </citation>
    <scope>NUCLEOTIDE SEQUENCE [GENOMIC DNA]</scope>
    <scope>PROTEIN SEQUENCE OF 216-244; 516-530 AND 604-612</scope>
    <scope>FUNCTION</scope>
    <scope>COFACTOR</scope>
    <scope>ACTIVITY REGULATION</scope>
    <scope>BIOPHYSICOCHEMICAL PROPERTIES</scope>
    <scope>SUBCELLULAR LOCATION</scope>
    <scope>MUTAGENESIS OF GLU-301; ASP-305; ASP-426; SER-569 AND ASP-610</scope>
    <source>
        <strain>ATCC 42149 / RIB 40</strain>
    </source>
</reference>
<reference key="2">
    <citation type="journal article" date="2005" name="Nature">
        <title>Genome sequencing and analysis of Aspergillus oryzae.</title>
        <authorList>
            <person name="Machida M."/>
            <person name="Asai K."/>
            <person name="Sano M."/>
            <person name="Tanaka T."/>
            <person name="Kumagai T."/>
            <person name="Terai G."/>
            <person name="Kusumoto K."/>
            <person name="Arima T."/>
            <person name="Akita O."/>
            <person name="Kashiwagi Y."/>
            <person name="Abe K."/>
            <person name="Gomi K."/>
            <person name="Horiuchi H."/>
            <person name="Kitamoto K."/>
            <person name="Kobayashi T."/>
            <person name="Takeuchi M."/>
            <person name="Denning D.W."/>
            <person name="Galagan J.E."/>
            <person name="Nierman W.C."/>
            <person name="Yu J."/>
            <person name="Archer D.B."/>
            <person name="Bennett J.W."/>
            <person name="Bhatnagar D."/>
            <person name="Cleveland T.E."/>
            <person name="Fedorova N.D."/>
            <person name="Gotoh O."/>
            <person name="Horikawa H."/>
            <person name="Hosoyama A."/>
            <person name="Ichinomiya M."/>
            <person name="Igarashi R."/>
            <person name="Iwashita K."/>
            <person name="Juvvadi P.R."/>
            <person name="Kato M."/>
            <person name="Kato Y."/>
            <person name="Kin T."/>
            <person name="Kokubun A."/>
            <person name="Maeda H."/>
            <person name="Maeyama N."/>
            <person name="Maruyama J."/>
            <person name="Nagasaki H."/>
            <person name="Nakajima T."/>
            <person name="Oda K."/>
            <person name="Okada K."/>
            <person name="Paulsen I."/>
            <person name="Sakamoto K."/>
            <person name="Sawano T."/>
            <person name="Takahashi M."/>
            <person name="Takase K."/>
            <person name="Terabayashi Y."/>
            <person name="Wortman J.R."/>
            <person name="Yamada O."/>
            <person name="Yamagata Y."/>
            <person name="Anazawa H."/>
            <person name="Hata Y."/>
            <person name="Koide Y."/>
            <person name="Komori T."/>
            <person name="Koyama Y."/>
            <person name="Minetoki T."/>
            <person name="Suharnan S."/>
            <person name="Tanaka A."/>
            <person name="Isono K."/>
            <person name="Kuhara S."/>
            <person name="Ogasawara N."/>
            <person name="Kikuchi H."/>
        </authorList>
    </citation>
    <scope>NUCLEOTIDE SEQUENCE [LARGE SCALE GENOMIC DNA]</scope>
    <source>
        <strain>ATCC 42149 / RIB 40</strain>
    </source>
</reference>
<keyword id="KW-0106">Calcium</keyword>
<keyword id="KW-0903">Direct protein sequencing</keyword>
<keyword id="KW-0325">Glycoprotein</keyword>
<keyword id="KW-0378">Hydrolase</keyword>
<keyword id="KW-0479">Metal-binding</keyword>
<keyword id="KW-0645">Protease</keyword>
<keyword id="KW-1185">Reference proteome</keyword>
<keyword id="KW-0964">Secreted</keyword>
<keyword id="KW-0720">Serine protease</keyword>
<keyword id="KW-0732">Signal</keyword>
<keyword id="KW-0865">Zymogen</keyword>
<feature type="signal peptide" evidence="3">
    <location>
        <begin position="1"/>
        <end position="22"/>
    </location>
</feature>
<feature type="propeptide" id="PRO_0000027368" description="Removed in mature form" evidence="3 5">
    <location>
        <begin position="23"/>
        <end position="215"/>
    </location>
</feature>
<feature type="chain" id="PRO_0000027369" description="Aorsin" evidence="5">
    <location>
        <begin position="216"/>
        <end position="652"/>
    </location>
</feature>
<feature type="domain" description="Peptidase S53">
    <location>
        <begin position="225"/>
        <end position="651"/>
    </location>
</feature>
<feature type="region of interest" description="Disordered" evidence="4">
    <location>
        <begin position="177"/>
        <end position="211"/>
    </location>
</feature>
<feature type="compositionally biased region" description="Basic residues" evidence="4">
    <location>
        <begin position="188"/>
        <end position="201"/>
    </location>
</feature>
<feature type="active site" description="Charge relay system" evidence="2">
    <location>
        <position position="301"/>
    </location>
</feature>
<feature type="active site" description="Charge relay system" evidence="2">
    <location>
        <position position="305"/>
    </location>
</feature>
<feature type="active site" description="Charge relay system" evidence="2">
    <location>
        <position position="569"/>
    </location>
</feature>
<feature type="binding site" evidence="5">
    <location>
        <position position="610"/>
    </location>
    <ligand>
        <name>Ca(2+)</name>
        <dbReference type="ChEBI" id="CHEBI:29108"/>
    </ligand>
</feature>
<feature type="binding site" evidence="1">
    <location>
        <position position="611"/>
    </location>
    <ligand>
        <name>Ca(2+)</name>
        <dbReference type="ChEBI" id="CHEBI:29108"/>
    </ligand>
</feature>
<feature type="binding site" evidence="1">
    <location>
        <position position="629"/>
    </location>
    <ligand>
        <name>Ca(2+)</name>
        <dbReference type="ChEBI" id="CHEBI:29108"/>
    </ligand>
</feature>
<feature type="binding site" evidence="1">
    <location>
        <position position="631"/>
    </location>
    <ligand>
        <name>Ca(2+)</name>
        <dbReference type="ChEBI" id="CHEBI:29108"/>
    </ligand>
</feature>
<feature type="glycosylation site" description="N-linked (GlcNAc...) asparagine" evidence="3">
    <location>
        <position position="112"/>
    </location>
</feature>
<feature type="glycosylation site" description="N-linked (GlcNAc...) asparagine" evidence="3">
    <location>
        <position position="218"/>
    </location>
</feature>
<feature type="glycosylation site" description="N-linked (GlcNAc...) asparagine" evidence="3">
    <location>
        <position position="247"/>
    </location>
</feature>
<feature type="glycosylation site" description="N-linked (GlcNAc...) asparagine" evidence="3">
    <location>
        <position position="331"/>
    </location>
</feature>
<feature type="glycosylation site" description="N-linked (GlcNAc...) asparagine" evidence="3">
    <location>
        <position position="445"/>
    </location>
</feature>
<feature type="glycosylation site" description="N-linked (GlcNAc...) asparagine" evidence="3">
    <location>
        <position position="613"/>
    </location>
</feature>
<feature type="mutagenesis site" description="1000-fold decrease in catalytic efficiency." evidence="5">
    <original>E</original>
    <variation>D</variation>
    <location>
        <position position="301"/>
    </location>
</feature>
<feature type="mutagenesis site" description="7000-fold decrease in catalytic efficiency." evidence="5">
    <original>E</original>
    <variation>Q</variation>
    <location>
        <position position="301"/>
    </location>
</feature>
<feature type="mutagenesis site" description="2000-fold decrease in catalytic efficiency." evidence="5">
    <original>D</original>
    <variation>E</variation>
    <location>
        <position position="305"/>
    </location>
</feature>
<feature type="mutagenesis site" description="20-fold decrease in catalytic efficiency." evidence="5">
    <original>D</original>
    <variation>N</variation>
    <location>
        <position position="305"/>
    </location>
</feature>
<feature type="mutagenesis site" description="40000-fold decrease in catalytic efficiency." evidence="5">
    <original>D</original>
    <variation>E</variation>
    <location>
        <position position="426"/>
    </location>
</feature>
<feature type="mutagenesis site" description="8000-fold decrease in catalytic efficiency." evidence="5">
    <original>D</original>
    <variation>N</variation>
    <location>
        <position position="426"/>
    </location>
</feature>
<feature type="mutagenesis site" description="20000-fold decrease in catalytic efficiency." evidence="5">
    <original>S</original>
    <variation>T</variation>
    <location>
        <position position="569"/>
    </location>
</feature>
<feature type="mutagenesis site" description="Active. Loss of calcium binding." evidence="5">
    <original>D</original>
    <variation>E</variation>
    <variation>N</variation>
    <location>
        <position position="610"/>
    </location>
</feature>
<feature type="sequence conflict" description="In Ref. 1; BAB97387." evidence="7" ref="1">
    <original>Q</original>
    <variation>R</variation>
    <location>
        <position position="118"/>
    </location>
</feature>
<name>AORSN_ASPOR</name>
<accession>Q8NK92</accession>
<accession>Q2UFT5</accession>
<sequence>MRPLSHLSFFNGLLLGLSALSAATSVVHERREATSSNWVKRARVNPSDKHVVRIGLTQSSLEEAHDLLMDVSNPSSPNYARFYSADEVAAKFAPSTETVNEVQNWLTEKGINASRVAQTQNHGWLVFHATSKEIENLFDTTYYEYHNRKTGKKAIACEQYHVPASVQKHIDYVHPGVNLNPSSGKPSSIRRRAAASKKTKLPARGPRPIQQHDVKGLNVTNCDQLITPECIRALYKIPSARAAPHPNNSLGIFEEGDYYAQEDLDLFFKTFAKDIPQGTHPIPAFIDGAEAPVPVTKAGGESDLDFELAYPIVHPQSITLYQTDDANWASNTTGFLNTFLDALDGSYCTYCAYGECGNDPSLDPVYPDDAGYDGQLMCGVFKPTNVISVSYGEQENDLPANYQQRQCMEFLKLGLQGVSVLFASGDNGVAGPPGDGNSVNGCLNNGTVFSPAFPNSCPYITNVGATKVYPGYTVSQPESAVYDPDGLYSYASGGGFSNIYPIPDYQAEAVATYFKDHNPPYPYYEGAENLGKNGGLYNRLGRGYPDVAANGDNIAVFNGGEFGSSGGTSASTPIFASIINRIIDERLAVGKGPVGFINPVLYKNPSVLNDITNGTNPGCGTDGFSTAPGWDPATGLGTPNYPKMLKLWLDLP</sequence>
<dbReference type="EC" id="3.4.21.-"/>
<dbReference type="EMBL" id="AB084899">
    <property type="protein sequence ID" value="BAB97387.1"/>
    <property type="molecule type" value="Genomic_DNA"/>
</dbReference>
<dbReference type="EMBL" id="BA000051">
    <property type="protein sequence ID" value="BAE59580.1"/>
    <property type="molecule type" value="Genomic_DNA"/>
</dbReference>
<dbReference type="RefSeq" id="XP_001821582.1">
    <property type="nucleotide sequence ID" value="XM_001821530.2"/>
</dbReference>
<dbReference type="SMR" id="Q8NK92"/>
<dbReference type="MEROPS" id="S53.007"/>
<dbReference type="GlyCosmos" id="Q8NK92">
    <property type="glycosylation" value="6 sites, No reported glycans"/>
</dbReference>
<dbReference type="EnsemblFungi" id="BAE59580">
    <property type="protein sequence ID" value="BAE59580"/>
    <property type="gene ID" value="AO090026000083"/>
</dbReference>
<dbReference type="GeneID" id="5993610"/>
<dbReference type="KEGG" id="aor:AO090026000083"/>
<dbReference type="VEuPathDB" id="FungiDB:AO090026000083"/>
<dbReference type="HOGENOM" id="CLU_013783_4_0_1"/>
<dbReference type="OMA" id="FPNSCPY"/>
<dbReference type="OrthoDB" id="40244at5052"/>
<dbReference type="Proteomes" id="UP000006564">
    <property type="component" value="Chromosome 3"/>
</dbReference>
<dbReference type="GO" id="GO:0005576">
    <property type="term" value="C:extracellular region"/>
    <property type="evidence" value="ECO:0000303"/>
    <property type="project" value="UniProtKB"/>
</dbReference>
<dbReference type="GO" id="GO:0046872">
    <property type="term" value="F:metal ion binding"/>
    <property type="evidence" value="ECO:0007669"/>
    <property type="project" value="UniProtKB-KW"/>
</dbReference>
<dbReference type="GO" id="GO:0004252">
    <property type="term" value="F:serine-type endopeptidase activity"/>
    <property type="evidence" value="ECO:0000315"/>
    <property type="project" value="UniProtKB"/>
</dbReference>
<dbReference type="GO" id="GO:0008240">
    <property type="term" value="F:tripeptidyl-peptidase activity"/>
    <property type="evidence" value="ECO:0007669"/>
    <property type="project" value="TreeGrafter"/>
</dbReference>
<dbReference type="GO" id="GO:0006508">
    <property type="term" value="P:proteolysis"/>
    <property type="evidence" value="ECO:0000314"/>
    <property type="project" value="UniProtKB"/>
</dbReference>
<dbReference type="CDD" id="cd04056">
    <property type="entry name" value="Peptidases_S53"/>
    <property type="match status" value="1"/>
</dbReference>
<dbReference type="CDD" id="cd11377">
    <property type="entry name" value="Pro-peptidase_S53"/>
    <property type="match status" value="1"/>
</dbReference>
<dbReference type="Gene3D" id="3.40.50.200">
    <property type="entry name" value="Peptidase S8/S53 domain"/>
    <property type="match status" value="1"/>
</dbReference>
<dbReference type="InterPro" id="IPR036852">
    <property type="entry name" value="Peptidase_S8/S53_dom_sf"/>
</dbReference>
<dbReference type="InterPro" id="IPR015366">
    <property type="entry name" value="S53_propep"/>
</dbReference>
<dbReference type="InterPro" id="IPR030400">
    <property type="entry name" value="Sedolisin_dom"/>
</dbReference>
<dbReference type="InterPro" id="IPR050819">
    <property type="entry name" value="Tripeptidyl-peptidase_I"/>
</dbReference>
<dbReference type="PANTHER" id="PTHR14218">
    <property type="entry name" value="PROTEASE S8 TRIPEPTIDYL PEPTIDASE I CLN2"/>
    <property type="match status" value="1"/>
</dbReference>
<dbReference type="PANTHER" id="PTHR14218:SF19">
    <property type="entry name" value="SERINE PROTEASE AORO, PUTATIVE (AFU_ORTHOLOGUE AFUA_6G10250)-RELATED"/>
    <property type="match status" value="1"/>
</dbReference>
<dbReference type="Pfam" id="PF09286">
    <property type="entry name" value="Pro-kuma_activ"/>
    <property type="match status" value="1"/>
</dbReference>
<dbReference type="SMART" id="SM00944">
    <property type="entry name" value="Pro-kuma_activ"/>
    <property type="match status" value="1"/>
</dbReference>
<dbReference type="SUPFAM" id="SSF54897">
    <property type="entry name" value="Protease propeptides/inhibitors"/>
    <property type="match status" value="1"/>
</dbReference>
<dbReference type="SUPFAM" id="SSF52743">
    <property type="entry name" value="Subtilisin-like"/>
    <property type="match status" value="1"/>
</dbReference>
<dbReference type="PROSITE" id="PS51695">
    <property type="entry name" value="SEDOLISIN"/>
    <property type="match status" value="1"/>
</dbReference>